<organism>
    <name type="scientific">Dictyostelium discoideum</name>
    <name type="common">Social amoeba</name>
    <dbReference type="NCBI Taxonomy" id="44689"/>
    <lineage>
        <taxon>Eukaryota</taxon>
        <taxon>Amoebozoa</taxon>
        <taxon>Evosea</taxon>
        <taxon>Eumycetozoa</taxon>
        <taxon>Dictyostelia</taxon>
        <taxon>Dictyosteliales</taxon>
        <taxon>Dictyosteliaceae</taxon>
        <taxon>Dictyostelium</taxon>
    </lineage>
</organism>
<feature type="chain" id="PRO_0000367832" description="Histone acetyltransferase type B catalytic subunit DDB_G0275159">
    <location>
        <begin position="1"/>
        <end position="466"/>
    </location>
</feature>
<feature type="domain" description="N-acetyltransferase">
    <location>
        <begin position="169"/>
        <end position="366"/>
    </location>
</feature>
<feature type="coiled-coil region" evidence="2">
    <location>
        <begin position="372"/>
        <end position="459"/>
    </location>
</feature>
<feature type="active site" description="Proton donor/acceptor" evidence="1">
    <location>
        <position position="279"/>
    </location>
</feature>
<feature type="binding site" evidence="1">
    <location>
        <begin position="240"/>
        <end position="242"/>
    </location>
    <ligand>
        <name>acetyl-CoA</name>
        <dbReference type="ChEBI" id="CHEBI:57288"/>
    </ligand>
</feature>
<feature type="binding site" evidence="1">
    <location>
        <begin position="247"/>
        <end position="253"/>
    </location>
    <ligand>
        <name>acetyl-CoA</name>
        <dbReference type="ChEBI" id="CHEBI:57288"/>
    </ligand>
</feature>
<feature type="site" description="Interaction with histone H4 N-terminus" evidence="1">
    <location>
        <position position="198"/>
    </location>
</feature>
<protein>
    <recommendedName>
        <fullName>Histone acetyltransferase type B catalytic subunit DDB_G0275159</fullName>
        <ecNumber evidence="1">2.3.1.48</ecNumber>
    </recommendedName>
</protein>
<evidence type="ECO:0000250" key="1">
    <source>
        <dbReference type="UniProtKB" id="O14929"/>
    </source>
</evidence>
<evidence type="ECO:0000255" key="2"/>
<evidence type="ECO:0000305" key="3"/>
<accession>Q869X7</accession>
<accession>Q553Z3</accession>
<gene>
    <name type="ORF">DDB_G0275159</name>
</gene>
<dbReference type="EC" id="2.3.1.48" evidence="1"/>
<dbReference type="EMBL" id="AAFI02000013">
    <property type="protein sequence ID" value="EAL69860.1"/>
    <property type="molecule type" value="Genomic_DNA"/>
</dbReference>
<dbReference type="RefSeq" id="XP_643818.1">
    <property type="nucleotide sequence ID" value="XM_638726.1"/>
</dbReference>
<dbReference type="SMR" id="Q869X7"/>
<dbReference type="FunCoup" id="Q869X7">
    <property type="interactions" value="736"/>
</dbReference>
<dbReference type="STRING" id="44689.Q869X7"/>
<dbReference type="PaxDb" id="44689-DDB0237833"/>
<dbReference type="EnsemblProtists" id="EAL69860">
    <property type="protein sequence ID" value="EAL69860"/>
    <property type="gene ID" value="DDB_G0275159"/>
</dbReference>
<dbReference type="GeneID" id="8619865"/>
<dbReference type="KEGG" id="ddi:DDB_G0275159"/>
<dbReference type="dictyBase" id="DDB_G0275159"/>
<dbReference type="VEuPathDB" id="AmoebaDB:DDB_G0275159"/>
<dbReference type="eggNOG" id="KOG2696">
    <property type="taxonomic scope" value="Eukaryota"/>
</dbReference>
<dbReference type="HOGENOM" id="CLU_036024_2_1_1"/>
<dbReference type="InParanoid" id="Q869X7"/>
<dbReference type="OMA" id="HNANECI"/>
<dbReference type="PhylomeDB" id="Q869X7"/>
<dbReference type="PRO" id="PR:Q869X7"/>
<dbReference type="Proteomes" id="UP000002195">
    <property type="component" value="Chromosome 2"/>
</dbReference>
<dbReference type="GO" id="GO:0000781">
    <property type="term" value="C:chromosome, telomeric region"/>
    <property type="evidence" value="ECO:0007669"/>
    <property type="project" value="GOC"/>
</dbReference>
<dbReference type="GO" id="GO:0000123">
    <property type="term" value="C:histone acetyltransferase complex"/>
    <property type="evidence" value="ECO:0000250"/>
    <property type="project" value="dictyBase"/>
</dbReference>
<dbReference type="GO" id="GO:0005634">
    <property type="term" value="C:nucleus"/>
    <property type="evidence" value="ECO:0007669"/>
    <property type="project" value="InterPro"/>
</dbReference>
<dbReference type="GO" id="GO:0010485">
    <property type="term" value="F:histone H4 acetyltransferase activity"/>
    <property type="evidence" value="ECO:0000318"/>
    <property type="project" value="GO_Central"/>
</dbReference>
<dbReference type="GO" id="GO:0031509">
    <property type="term" value="P:subtelomeric heterochromatin formation"/>
    <property type="evidence" value="ECO:0007669"/>
    <property type="project" value="InterPro"/>
</dbReference>
<dbReference type="Gene3D" id="3.40.630.30">
    <property type="match status" value="1"/>
</dbReference>
<dbReference type="Gene3D" id="3.90.360.10">
    <property type="entry name" value="Histone acetyl transferase 1 (HAT1), N-terminal domain"/>
    <property type="match status" value="1"/>
</dbReference>
<dbReference type="InterPro" id="IPR016181">
    <property type="entry name" value="Acyl_CoA_acyltransferase"/>
</dbReference>
<dbReference type="InterPro" id="IPR019467">
    <property type="entry name" value="Hat1_N"/>
</dbReference>
<dbReference type="InterPro" id="IPR037113">
    <property type="entry name" value="Hat1_N_sf"/>
</dbReference>
<dbReference type="InterPro" id="IPR017380">
    <property type="entry name" value="Hist_AcTrfase_B-typ_cat-su"/>
</dbReference>
<dbReference type="PANTHER" id="PTHR12046">
    <property type="entry name" value="HISTONE ACETYLTRANSFERASE TYPE B CATALYTIC SUBUNIT"/>
    <property type="match status" value="1"/>
</dbReference>
<dbReference type="Pfam" id="PF10394">
    <property type="entry name" value="Hat1_N"/>
    <property type="match status" value="1"/>
</dbReference>
<dbReference type="PIRSF" id="PIRSF038084">
    <property type="entry name" value="HAT-B_cat"/>
    <property type="match status" value="1"/>
</dbReference>
<dbReference type="SUPFAM" id="SSF55729">
    <property type="entry name" value="Acyl-CoA N-acyltransferases (Nat)"/>
    <property type="match status" value="1"/>
</dbReference>
<comment type="catalytic activity">
    <reaction evidence="1">
        <text>L-lysyl-[protein] + acetyl-CoA = N(6)-acetyl-L-lysyl-[protein] + CoA + H(+)</text>
        <dbReference type="Rhea" id="RHEA:45948"/>
        <dbReference type="Rhea" id="RHEA-COMP:9752"/>
        <dbReference type="Rhea" id="RHEA-COMP:10731"/>
        <dbReference type="ChEBI" id="CHEBI:15378"/>
        <dbReference type="ChEBI" id="CHEBI:29969"/>
        <dbReference type="ChEBI" id="CHEBI:57287"/>
        <dbReference type="ChEBI" id="CHEBI:57288"/>
        <dbReference type="ChEBI" id="CHEBI:61930"/>
        <dbReference type="EC" id="2.3.1.48"/>
    </reaction>
</comment>
<comment type="similarity">
    <text evidence="3">Belongs to the HAT1 family.</text>
</comment>
<reference key="1">
    <citation type="journal article" date="2002" name="Nature">
        <title>Sequence and analysis of chromosome 2 of Dictyostelium discoideum.</title>
        <authorList>
            <person name="Gloeckner G."/>
            <person name="Eichinger L."/>
            <person name="Szafranski K."/>
            <person name="Pachebat J.A."/>
            <person name="Bankier A.T."/>
            <person name="Dear P.H."/>
            <person name="Lehmann R."/>
            <person name="Baumgart C."/>
            <person name="Parra G."/>
            <person name="Abril J.F."/>
            <person name="Guigo R."/>
            <person name="Kumpf K."/>
            <person name="Tunggal B."/>
            <person name="Cox E.C."/>
            <person name="Quail M.A."/>
            <person name="Platzer M."/>
            <person name="Rosenthal A."/>
            <person name="Noegel A.A."/>
        </authorList>
    </citation>
    <scope>NUCLEOTIDE SEQUENCE [LARGE SCALE GENOMIC DNA]</scope>
    <source>
        <strain>AX4</strain>
    </source>
</reference>
<reference key="2">
    <citation type="journal article" date="2005" name="Nature">
        <title>The genome of the social amoeba Dictyostelium discoideum.</title>
        <authorList>
            <person name="Eichinger L."/>
            <person name="Pachebat J.A."/>
            <person name="Gloeckner G."/>
            <person name="Rajandream M.A."/>
            <person name="Sucgang R."/>
            <person name="Berriman M."/>
            <person name="Song J."/>
            <person name="Olsen R."/>
            <person name="Szafranski K."/>
            <person name="Xu Q."/>
            <person name="Tunggal B."/>
            <person name="Kummerfeld S."/>
            <person name="Madera M."/>
            <person name="Konfortov B.A."/>
            <person name="Rivero F."/>
            <person name="Bankier A.T."/>
            <person name="Lehmann R."/>
            <person name="Hamlin N."/>
            <person name="Davies R."/>
            <person name="Gaudet P."/>
            <person name="Fey P."/>
            <person name="Pilcher K."/>
            <person name="Chen G."/>
            <person name="Saunders D."/>
            <person name="Sodergren E.J."/>
            <person name="Davis P."/>
            <person name="Kerhornou A."/>
            <person name="Nie X."/>
            <person name="Hall N."/>
            <person name="Anjard C."/>
            <person name="Hemphill L."/>
            <person name="Bason N."/>
            <person name="Farbrother P."/>
            <person name="Desany B."/>
            <person name="Just E."/>
            <person name="Morio T."/>
            <person name="Rost R."/>
            <person name="Churcher C.M."/>
            <person name="Cooper J."/>
            <person name="Haydock S."/>
            <person name="van Driessche N."/>
            <person name="Cronin A."/>
            <person name="Goodhead I."/>
            <person name="Muzny D.M."/>
            <person name="Mourier T."/>
            <person name="Pain A."/>
            <person name="Lu M."/>
            <person name="Harper D."/>
            <person name="Lindsay R."/>
            <person name="Hauser H."/>
            <person name="James K.D."/>
            <person name="Quiles M."/>
            <person name="Madan Babu M."/>
            <person name="Saito T."/>
            <person name="Buchrieser C."/>
            <person name="Wardroper A."/>
            <person name="Felder M."/>
            <person name="Thangavelu M."/>
            <person name="Johnson D."/>
            <person name="Knights A."/>
            <person name="Loulseged H."/>
            <person name="Mungall K.L."/>
            <person name="Oliver K."/>
            <person name="Price C."/>
            <person name="Quail M.A."/>
            <person name="Urushihara H."/>
            <person name="Hernandez J."/>
            <person name="Rabbinowitsch E."/>
            <person name="Steffen D."/>
            <person name="Sanders M."/>
            <person name="Ma J."/>
            <person name="Kohara Y."/>
            <person name="Sharp S."/>
            <person name="Simmonds M.N."/>
            <person name="Spiegler S."/>
            <person name="Tivey A."/>
            <person name="Sugano S."/>
            <person name="White B."/>
            <person name="Walker D."/>
            <person name="Woodward J.R."/>
            <person name="Winckler T."/>
            <person name="Tanaka Y."/>
            <person name="Shaulsky G."/>
            <person name="Schleicher M."/>
            <person name="Weinstock G.M."/>
            <person name="Rosenthal A."/>
            <person name="Cox E.C."/>
            <person name="Chisholm R.L."/>
            <person name="Gibbs R.A."/>
            <person name="Loomis W.F."/>
            <person name="Platzer M."/>
            <person name="Kay R.R."/>
            <person name="Williams J.G."/>
            <person name="Dear P.H."/>
            <person name="Noegel A.A."/>
            <person name="Barrell B.G."/>
            <person name="Kuspa A."/>
        </authorList>
    </citation>
    <scope>NUCLEOTIDE SEQUENCE [LARGE SCALE GENOMIC DNA]</scope>
    <source>
        <strain>AX4</strain>
    </source>
</reference>
<name>HAT12_DICDI</name>
<proteinExistence type="inferred from homology"/>
<sequence>MTSKIKSSNTLLTFDANEVTNIKLVWDIEELKNKDKEDKAHIKDEEEDEDGPVSFHPSFSHQIFNDEQVQGYEACKIDIYMGAGSLTSYIDTNYTLQSKNLTNVEGELLKVFSKQDPPISKQSFYKFIEEKEKSFKPIGKKIHEYTITDKESGEETEYEVYFGRITDQAVFRYHEKLQIFVLWYIDGSSYIWTDDPNWDIFFIFEKRIIDGEKRYGITGYSTIYNFYHHPEQTRARISQYLILPPYQRMGHGKYLFNSIHQYYKTNDGFYGPVYDVTIEDPADDFNLLRNYVDLKNIIDEKLFDNVILDLNANNKSVFEEIRKKLLVPHKQSKVCLEIYLFSKFLATPNSNPKYKEFRIAIKKRLYKQNIGDSEQIEKMKQQVAQENEDNLRLEQEELQELQDIENKKNGTNIKVAINTKELTTPSEPEKSKEEIEKDRLEEIIQLYKDLEENYHKTLSSLNLITK</sequence>
<keyword id="KW-0012">Acyltransferase</keyword>
<keyword id="KW-0175">Coiled coil</keyword>
<keyword id="KW-1185">Reference proteome</keyword>
<keyword id="KW-0808">Transferase</keyword>